<protein>
    <recommendedName>
        <fullName evidence="1">Maturase K</fullName>
    </recommendedName>
    <alternativeName>
        <fullName evidence="1">Intron maturase</fullName>
    </alternativeName>
</protein>
<sequence length="515" mass="60966">MDEFHRCGKEDSFWQQCFLYPLFFQEDLYAISHDHYLDVSSSSRPMEHLSSNDQLSFLTVKRLIGQIRQQNHSIVLFVNCDPNPLADRKKSFYSESVLEALTLVLEVPFSIWSKSSVEGMNESKSFRSIHSIFPFLEDKFPHSNSILDARIPYSIHPEILVRTFRRWIRDAPSLHPLRSVLYEYRNSPDNLQRSIIVVPRVNTRFFLFLWNYYVCECESILFSRLKRSSHSRSLSHGSFPHRTHFHRKIKHIIIFSRRNSLKSIWSLKDPKIHYVRYGERPIIAIKGAHLLVKKCRYYLLIFRQFYFHLWSEPYRVCSHQLSKNCSSSPGYFLRVRMNPILVRTKMLDELFIADLITDEIDPIVPIVPIIGLLATEKFCDISGRPISKLSWTSLTDDDILDRFDQIWRNLFHYYSGSFDRDGLYRIKYILSLSCAKTLACKHKSTIRVVRKELGPELFKKSFSKEREFYSLRFSSKAAARSQRERIWHSDIPQINPLANSWQKIQDLKIENLFDQ</sequence>
<comment type="function">
    <text evidence="1">Usually encoded in the trnK tRNA gene intron. Probably assists in splicing its own and other chloroplast group II introns.</text>
</comment>
<comment type="subcellular location">
    <subcellularLocation>
        <location>Plastid</location>
        <location>Chloroplast</location>
    </subcellularLocation>
</comment>
<comment type="similarity">
    <text evidence="1">Belongs to the intron maturase 2 family. MatK subfamily.</text>
</comment>
<proteinExistence type="inferred from homology"/>
<dbReference type="EMBL" id="AB080931">
    <property type="protein sequence ID" value="BAC11934.1"/>
    <property type="molecule type" value="Genomic_DNA"/>
</dbReference>
<dbReference type="GO" id="GO:0009507">
    <property type="term" value="C:chloroplast"/>
    <property type="evidence" value="ECO:0007669"/>
    <property type="project" value="UniProtKB-SubCell"/>
</dbReference>
<dbReference type="GO" id="GO:0003723">
    <property type="term" value="F:RNA binding"/>
    <property type="evidence" value="ECO:0007669"/>
    <property type="project" value="UniProtKB-KW"/>
</dbReference>
<dbReference type="GO" id="GO:0006397">
    <property type="term" value="P:mRNA processing"/>
    <property type="evidence" value="ECO:0007669"/>
    <property type="project" value="UniProtKB-KW"/>
</dbReference>
<dbReference type="GO" id="GO:0008380">
    <property type="term" value="P:RNA splicing"/>
    <property type="evidence" value="ECO:0007669"/>
    <property type="project" value="UniProtKB-UniRule"/>
</dbReference>
<dbReference type="GO" id="GO:0008033">
    <property type="term" value="P:tRNA processing"/>
    <property type="evidence" value="ECO:0007669"/>
    <property type="project" value="UniProtKB-KW"/>
</dbReference>
<dbReference type="HAMAP" id="MF_01390">
    <property type="entry name" value="MatK"/>
    <property type="match status" value="1"/>
</dbReference>
<dbReference type="InterPro" id="IPR024937">
    <property type="entry name" value="Domain_X"/>
</dbReference>
<dbReference type="InterPro" id="IPR002866">
    <property type="entry name" value="Maturase_MatK"/>
</dbReference>
<dbReference type="InterPro" id="IPR024942">
    <property type="entry name" value="Maturase_MatK_N"/>
</dbReference>
<dbReference type="PANTHER" id="PTHR34811">
    <property type="entry name" value="MATURASE K"/>
    <property type="match status" value="1"/>
</dbReference>
<dbReference type="PANTHER" id="PTHR34811:SF1">
    <property type="entry name" value="MATURASE K"/>
    <property type="match status" value="1"/>
</dbReference>
<dbReference type="Pfam" id="PF01348">
    <property type="entry name" value="Intron_maturas2"/>
    <property type="match status" value="1"/>
</dbReference>
<dbReference type="Pfam" id="PF01824">
    <property type="entry name" value="MatK_N"/>
    <property type="match status" value="1"/>
</dbReference>
<accession>Q8HW57</accession>
<gene>
    <name evidence="1" type="primary">matK</name>
</gene>
<evidence type="ECO:0000255" key="1">
    <source>
        <dbReference type="HAMAP-Rule" id="MF_01390"/>
    </source>
</evidence>
<feature type="chain" id="PRO_0000143612" description="Maturase K">
    <location>
        <begin position="1"/>
        <end position="515"/>
    </location>
</feature>
<name>MATK_PINEL</name>
<keyword id="KW-0150">Chloroplast</keyword>
<keyword id="KW-0507">mRNA processing</keyword>
<keyword id="KW-0934">Plastid</keyword>
<keyword id="KW-0694">RNA-binding</keyword>
<keyword id="KW-0819">tRNA processing</keyword>
<organism>
    <name type="scientific">Pinus elliottii</name>
    <name type="common">Slash pine</name>
    <dbReference type="NCBI Taxonomy" id="42064"/>
    <lineage>
        <taxon>Eukaryota</taxon>
        <taxon>Viridiplantae</taxon>
        <taxon>Streptophyta</taxon>
        <taxon>Embryophyta</taxon>
        <taxon>Tracheophyta</taxon>
        <taxon>Spermatophyta</taxon>
        <taxon>Pinopsida</taxon>
        <taxon>Pinidae</taxon>
        <taxon>Conifers I</taxon>
        <taxon>Pinales</taxon>
        <taxon>Pinaceae</taxon>
        <taxon>Pinus</taxon>
        <taxon>Pinus subgen. Pinus</taxon>
    </lineage>
</organism>
<reference key="1">
    <citation type="submission" date="2002-03" db="EMBL/GenBank/DDBJ databases">
        <title>Phylogeny of the North American pines.</title>
        <authorList>
            <person name="Geada Lopez G."/>
            <person name="Kamiya K."/>
            <person name="Harada K."/>
        </authorList>
    </citation>
    <scope>NUCLEOTIDE SEQUENCE [GENOMIC DNA]</scope>
</reference>
<geneLocation type="chloroplast"/>